<gene>
    <name type="primary">US11</name>
</gene>
<comment type="function">
    <text evidence="4 5 6 7 8">Plays a role in the inhibition of host immune response. Participates in the inhibition of host autophagy by interacting with and inhibiting host PKR/EIF2AK2. This interaction also prevents the interferon-induced shut down of protein synthesis following viral infection. Downmodulates the host RLR signaling pathway via direct interaction with host RIGI and IFIH1. Associates with endogenous HSP90 to disrupt the HSP90-TBK1 complex and induces destabilization of host TBK1 through a proteasome-dependent pathway. May also participate in nuclear egress of viral particles through interactions with host NCL and regulation of the viral UL34 mRNA.</text>
</comment>
<comment type="subunit">
    <text evidence="2 4 5 6 8">Associates with RNA derived from the 60S ribosomal subunits. Seems to form large heterogeneous polymers of up to 200 identical subunits in the cytoplasm. Interacts with host EIF2AK2. Interacts with host NCL. Interacts with host RIGI; this interaction prevents RIGI binding to host MAVS. Interacts with host IFIH1; this interaction prevents host IFH1 binding to MAVS. Interacts with host HSP90; this interaction inhibits TBK1-induced interferon induction.</text>
</comment>
<comment type="interaction">
    <interactant intactId="EBI-6150681">
        <id>P04487</id>
    </interactant>
    <interactant intactId="EBI-640775">
        <id>P19525</id>
        <label>EIF2AK2</label>
    </interactant>
    <organismsDiffer>true</organismsDiffer>
    <experiments>3</experiments>
</comment>
<comment type="interaction">
    <interactant intactId="EBI-6150681">
        <id>P04487</id>
    </interactant>
    <interactant intactId="EBI-6115771">
        <id>Q9BYX4</id>
        <label>IFIH1</label>
    </interactant>
    <organismsDiffer>true</organismsDiffer>
    <experiments>4</experiments>
</comment>
<comment type="interaction">
    <interactant intactId="EBI-6150681">
        <id>P04487</id>
    </interactant>
    <interactant intactId="EBI-995350">
        <id>O95786</id>
        <label>RIGI</label>
    </interactant>
    <organismsDiffer>true</organismsDiffer>
    <experiments>4</experiments>
</comment>
<comment type="subcellular location">
    <subcellularLocation>
        <location evidence="3">Host nucleus</location>
        <location evidence="3">Host nucleolus</location>
    </subcellularLocation>
    <subcellularLocation>
        <location evidence="3">Host cytoplasm</location>
    </subcellularLocation>
    <text>Following infection, it is released into the cell cytoplasm.</text>
</comment>
<comment type="domain">
    <text>The N-terminal tetrapeptide may be responsible for virion incorporation.</text>
</comment>
<comment type="domain">
    <text>The C-terminal half, rich in Arg and Pro residues, seems to be responsible for the RNA-binding activity, and for the association with ribosomes and the localization to the nucleolus. This region may adopt a poly-L-proline II helix secondary structure.</text>
</comment>
<comment type="PTM">
    <text evidence="9">May be phosphorylated on Ser residues by host kinases.</text>
</comment>
<comment type="similarity">
    <text evidence="10">Belongs to the simplex virus US11 protein family.</text>
</comment>
<accession>P04487</accession>
<proteinExistence type="evidence at protein level"/>
<protein>
    <recommendedName>
        <fullName>Accessory factor US11</fullName>
    </recommendedName>
    <alternativeName>
        <fullName>Vmw21</fullName>
    </alternativeName>
</protein>
<feature type="chain" id="PRO_0000115740" description="Accessory factor US11">
    <location>
        <begin position="1"/>
        <end position="161"/>
    </location>
</feature>
<feature type="repeat" description="1">
    <location>
        <begin position="85"/>
        <end position="90"/>
    </location>
</feature>
<feature type="repeat" description="2">
    <location>
        <begin position="91"/>
        <end position="96"/>
    </location>
</feature>
<feature type="repeat" description="3">
    <location>
        <begin position="97"/>
        <end position="102"/>
    </location>
</feature>
<feature type="repeat" description="4">
    <location>
        <begin position="103"/>
        <end position="108"/>
    </location>
</feature>
<feature type="repeat" description="5">
    <location>
        <begin position="109"/>
        <end position="114"/>
    </location>
</feature>
<feature type="repeat" description="6">
    <location>
        <begin position="115"/>
        <end position="120"/>
    </location>
</feature>
<feature type="repeat" description="7">
    <location>
        <begin position="121"/>
        <end position="126"/>
    </location>
</feature>
<feature type="repeat" description="8">
    <location>
        <begin position="127"/>
        <end position="132"/>
    </location>
</feature>
<feature type="repeat" description="9">
    <location>
        <begin position="133"/>
        <end position="138"/>
    </location>
</feature>
<feature type="repeat" description="10">
    <location>
        <begin position="139"/>
        <end position="144"/>
    </location>
</feature>
<feature type="repeat" description="11">
    <location>
        <begin position="145"/>
        <end position="150"/>
    </location>
</feature>
<feature type="repeat" description="12">
    <location>
        <begin position="151"/>
        <end position="156"/>
    </location>
</feature>
<feature type="region of interest" description="Disordered" evidence="1">
    <location>
        <begin position="1"/>
        <end position="161"/>
    </location>
</feature>
<feature type="region of interest" description="12 X 6 AA approximate tandem repeats">
    <location>
        <begin position="85"/>
        <end position="156"/>
    </location>
</feature>
<feature type="compositionally biased region" description="Pro residues" evidence="1">
    <location>
        <begin position="1"/>
        <end position="12"/>
    </location>
</feature>
<feature type="compositionally biased region" description="Basic residues" evidence="1">
    <location>
        <begin position="30"/>
        <end position="39"/>
    </location>
</feature>
<feature type="compositionally biased region" description="Basic and acidic residues" evidence="1">
    <location>
        <begin position="90"/>
        <end position="161"/>
    </location>
</feature>
<keyword id="KW-0238">DNA-binding</keyword>
<keyword id="KW-1035">Host cytoplasm</keyword>
<keyword id="KW-1048">Host nucleus</keyword>
<keyword id="KW-0945">Host-virus interaction</keyword>
<keyword id="KW-1083">Inhibition of host autophagy by virus</keyword>
<keyword id="KW-1090">Inhibition of host innate immune response by virus</keyword>
<keyword id="KW-1114">Inhibition of host interferon signaling pathway by virus</keyword>
<keyword id="KW-1089">Inhibition of host MDA5 by virus</keyword>
<keyword id="KW-1102">Inhibition of host PKR by virus</keyword>
<keyword id="KW-1088">Inhibition of host RIG-I by virus</keyword>
<keyword id="KW-1113">Inhibition of host RLR pathway by virus</keyword>
<keyword id="KW-1223">Inhibition of host TBK1 by virus</keyword>
<keyword id="KW-1225">Inhibition of host TLR pathway by virus</keyword>
<keyword id="KW-0922">Interferon antiviral system evasion</keyword>
<keyword id="KW-0426">Late protein</keyword>
<keyword id="KW-0597">Phosphoprotein</keyword>
<keyword id="KW-1185">Reference proteome</keyword>
<keyword id="KW-0677">Repeat</keyword>
<keyword id="KW-0694">RNA-binding</keyword>
<keyword id="KW-0899">Viral immunoevasion</keyword>
<organism>
    <name type="scientific">Human herpesvirus 1 (strain 17)</name>
    <name type="common">HHV-1</name>
    <name type="synonym">Human herpes simplex virus 1</name>
    <dbReference type="NCBI Taxonomy" id="10299"/>
    <lineage>
        <taxon>Viruses</taxon>
        <taxon>Duplodnaviria</taxon>
        <taxon>Heunggongvirae</taxon>
        <taxon>Peploviricota</taxon>
        <taxon>Herviviricetes</taxon>
        <taxon>Herpesvirales</taxon>
        <taxon>Orthoherpesviridae</taxon>
        <taxon>Alphaherpesvirinae</taxon>
        <taxon>Simplexvirus</taxon>
        <taxon>Simplexvirus humanalpha1</taxon>
        <taxon>Human herpesvirus 1</taxon>
    </lineage>
</organism>
<reference key="1">
    <citation type="journal article" date="1984" name="Nucleic Acids Res.">
        <title>A 3' co-terminal family of mRNAs from the herpes simplex virus type 1 short region: two overlapping reading frames encode unrelated polypeptide one of which has highly reiterated amino acid sequence.</title>
        <authorList>
            <person name="Rixon F.J."/>
            <person name="McGeoch D.J."/>
        </authorList>
    </citation>
    <scope>NUCLEOTIDE SEQUENCE [GENOMIC DNA]</scope>
</reference>
<reference key="2">
    <citation type="journal article" date="1985" name="J. Mol. Biol.">
        <title>Sequence determination and genetic content of the short unique region in the genome of herpes simplex virus type 1.</title>
        <authorList>
            <person name="McGeoch D.J."/>
            <person name="Dolan A."/>
            <person name="Donald S."/>
            <person name="Rixon F.J."/>
        </authorList>
    </citation>
    <scope>NUCLEOTIDE SEQUENCE [GENOMIC DNA]</scope>
</reference>
<reference key="3">
    <citation type="journal article" date="1987" name="J. Gen. Virol.">
        <title>The products of gene US11 of herpes simplex virus type 1 are DNA-binding and localize to the nucleoli of infected cells.</title>
        <authorList>
            <person name="McLean C.A."/>
            <person name="Rixon F.J."/>
            <person name="Marsden H.S."/>
        </authorList>
    </citation>
    <scope>CHARACTERIZATION</scope>
</reference>
<reference key="4">
    <citation type="journal article" date="1988" name="J. Gen. Virol.">
        <authorList>
            <person name="McLean C.A."/>
            <person name="Rixon F.J."/>
            <person name="Marsden H.S."/>
        </authorList>
    </citation>
    <scope>ERRATUM OF PUBMED:3037015</scope>
</reference>
<reference key="5">
    <citation type="journal article" date="1995" name="Electrophoresis">
        <title>Phosphorylation of herpes simplex virus type 1 Us11 protein is independent of viral genome expression.</title>
        <authorList>
            <person name="Simonin D."/>
            <person name="Diaz J.-J."/>
            <person name="Kindbeiter K."/>
            <person name="Pernas P."/>
            <person name="Madjar J.-J."/>
        </authorList>
    </citation>
    <scope>PHOSPHORYLATION</scope>
</reference>
<reference key="6">
    <citation type="journal article" date="1996" name="J. Virol.">
        <title>Structure and function in the herpes simplex virus 1 RNA-binding protein U(s)11: mapping of the domain required for ribosomal and nucleolar association and RNA binding in vitro.</title>
        <authorList>
            <person name="Roller R.J."/>
            <person name="Monk L.L."/>
            <person name="Stuart D."/>
            <person name="Roizman B."/>
        </authorList>
    </citation>
    <scope>CHARACTERIZATION</scope>
</reference>
<reference key="7">
    <citation type="journal article" date="1998" name="J. Gen. Virol.">
        <title>Distinct domains in herpes simplex virus type 1 US11 protein mediate post-transcriptional transactivation of human T-lymphotropic virus type I envelope glycoprotein gene expression and specific binding to the Rex responsive element.</title>
        <authorList>
            <person name="Schaerer-Uthurralt N."/>
            <person name="Erard M."/>
            <person name="Kindbeiter K."/>
            <person name="Madjar J.-J."/>
            <person name="Diaz J.-J."/>
        </authorList>
    </citation>
    <scope>CHARACTERIZATION</scope>
</reference>
<reference key="8">
    <citation type="journal article" date="2002" name="J. Virol.">
        <title>The herpes simplex virus type 1 U(S)11 protein interacts with protein kinase R in infected cells and requires a 30-amino-acid sequence adjacent to a kinase substrate domain.</title>
        <authorList>
            <person name="Cassady K.A."/>
            <person name="Gross M."/>
        </authorList>
    </citation>
    <scope>INTERACTION WITH HOST EIF2AK2</scope>
</reference>
<reference key="9">
    <citation type="journal article" date="2010" name="Virus Res.">
        <title>Molecular anatomy of subcellular localization of HSV-1 tegument protein US11 in living cells.</title>
        <authorList>
            <person name="Xing J."/>
            <person name="Wu F."/>
            <person name="Pan W."/>
            <person name="Zheng C."/>
        </authorList>
    </citation>
    <scope>SUBCELLULAR LOCATION</scope>
</reference>
<reference key="10">
    <citation type="journal article" date="2012" name="J. Virol.">
        <title>Herpes simplex virus 1 tegument protein US11 downmodulates the RLR signaling pathway via direct interaction with RIG-I and MDA-5.</title>
        <authorList>
            <person name="Xing J."/>
            <person name="Wang S."/>
            <person name="Lin R."/>
            <person name="Mossman K.L."/>
            <person name="Zheng C."/>
        </authorList>
    </citation>
    <scope>FUNCTION</scope>
    <scope>INTERACTION WITH HOST RIGI AND IFIH1</scope>
</reference>
<reference key="11">
    <citation type="journal article" date="2012" name="J. Virol.">
        <title>Nucleolin interacts with US11 protein of herpes simplex virus 1 and is involved in its trafficking.</title>
        <authorList>
            <person name="Greco A."/>
            <person name="Arata L."/>
            <person name="Soler E."/>
            <person name="Gaume X."/>
            <person name="Coute Y."/>
            <person name="Hacot S."/>
            <person name="Calle A."/>
            <person name="Monier K."/>
            <person name="Epstein A.L."/>
            <person name="Sanchez J.C."/>
            <person name="Bouvet P."/>
            <person name="Diaz J.J."/>
        </authorList>
    </citation>
    <scope>FUNCTION</scope>
    <scope>INTERACTION WITH HOST NCL</scope>
</reference>
<reference key="12">
    <citation type="journal article" date="2013" name="J. Virol.">
        <title>The herpes simplex virus 1 Us11 protein inhibits autophagy through its interaction with the protein kinase PKR.</title>
        <authorList>
            <person name="Lussignol M."/>
            <person name="Queval C."/>
            <person name="Bernet-Camard M.F."/>
            <person name="Cotte-Laffitte J."/>
            <person name="Beau I."/>
            <person name="Codogno P."/>
            <person name="Esclatine A."/>
        </authorList>
    </citation>
    <scope>FUNCTION</scope>
    <scope>INTERACTION WITH HOST EIF2AK2</scope>
</reference>
<reference key="13">
    <citation type="journal article" date="2013" name="Microbiol. Immunol.">
        <title>Herpes simplex virus type 1 virion-derived US11 inhibits type 1 interferon-induced protein kinase R phosphorylation.</title>
        <authorList>
            <person name="Ishioka K."/>
            <person name="Ikuta K."/>
            <person name="Sato Y."/>
            <person name="Kaneko H."/>
            <person name="Sorimachi K."/>
            <person name="Fukushima E."/>
            <person name="Saijo M."/>
            <person name="Suzutani T."/>
        </authorList>
    </citation>
    <scope>FUNCTION</scope>
</reference>
<reference key="14">
    <citation type="journal article" date="2018" name="J. Virol.">
        <title>Herpes Simplex Virus 1 Inhibits TANK-Binding Kinase 1 through Formation of the Us11-Hsp90 Complex.</title>
        <authorList>
            <person name="Liu X."/>
            <person name="Main D."/>
            <person name="Ma Y."/>
            <person name="He B."/>
        </authorList>
    </citation>
    <scope>FUNCTION</scope>
    <scope>INTERACTION WITH HOST HSP90AA1</scope>
</reference>
<sequence>MSQTQPPAPVGPGDPDVYLKGVPSAGMHPRGVHAPRGHPRMISGPPQRGDNDQAAGQCGDSGLLRVGADTTISKPSEAVRPPTIPRTPRVPREPRVPRPPREPREPRVPRAPRDPRVPRDPRDPRQPRSPREPRSPREPRSPREPRTPRTPREPRTARGSV</sequence>
<name>RNB_HHV11</name>
<dbReference type="EMBL" id="L00036">
    <property type="protein sequence ID" value="AAA96677.1"/>
    <property type="molecule type" value="Genomic_DNA"/>
</dbReference>
<dbReference type="EMBL" id="X14112">
    <property type="protein sequence ID" value="CAA32276.1"/>
    <property type="molecule type" value="Genomic_DNA"/>
</dbReference>
<dbReference type="EMBL" id="X02138">
    <property type="protein sequence ID" value="CAA26065.1"/>
    <property type="molecule type" value="Genomic_DNA"/>
</dbReference>
<dbReference type="EMBL" id="X00428">
    <property type="protein sequence ID" value="CAA25125.1"/>
    <property type="molecule type" value="Genomic_RNA"/>
</dbReference>
<dbReference type="PIR" id="A03728">
    <property type="entry name" value="DNBE17"/>
</dbReference>
<dbReference type="RefSeq" id="YP_009137147.1">
    <property type="nucleotide sequence ID" value="NC_001806.2"/>
</dbReference>
<dbReference type="BioGRID" id="971460">
    <property type="interactions" value="6"/>
</dbReference>
<dbReference type="IntAct" id="P04487">
    <property type="interactions" value="145"/>
</dbReference>
<dbReference type="MINT" id="P04487"/>
<dbReference type="DNASU" id="2703439"/>
<dbReference type="GeneID" id="2703439"/>
<dbReference type="KEGG" id="vg:2703439"/>
<dbReference type="Proteomes" id="UP000009294">
    <property type="component" value="Segment"/>
</dbReference>
<dbReference type="GO" id="GO:0030430">
    <property type="term" value="C:host cell cytoplasm"/>
    <property type="evidence" value="ECO:0000314"/>
    <property type="project" value="UniProtKB"/>
</dbReference>
<dbReference type="GO" id="GO:0044196">
    <property type="term" value="C:host cell nucleolus"/>
    <property type="evidence" value="ECO:0000314"/>
    <property type="project" value="UniProtKB"/>
</dbReference>
<dbReference type="GO" id="GO:0042025">
    <property type="term" value="C:host cell nucleus"/>
    <property type="evidence" value="ECO:0000314"/>
    <property type="project" value="UniProtKB"/>
</dbReference>
<dbReference type="GO" id="GO:0003677">
    <property type="term" value="F:DNA binding"/>
    <property type="evidence" value="ECO:0007669"/>
    <property type="project" value="UniProtKB-KW"/>
</dbReference>
<dbReference type="GO" id="GO:0004175">
    <property type="term" value="F:endopeptidase activity"/>
    <property type="evidence" value="ECO:0000314"/>
    <property type="project" value="UniProt"/>
</dbReference>
<dbReference type="GO" id="GO:0140313">
    <property type="term" value="F:molecular sequestering activity"/>
    <property type="evidence" value="ECO:0000314"/>
    <property type="project" value="UniProt"/>
</dbReference>
<dbReference type="GO" id="GO:0030291">
    <property type="term" value="F:protein serine/threonine kinase inhibitor activity"/>
    <property type="evidence" value="ECO:0007669"/>
    <property type="project" value="UniProtKB-KW"/>
</dbReference>
<dbReference type="GO" id="GO:0003723">
    <property type="term" value="F:RNA binding"/>
    <property type="evidence" value="ECO:0007669"/>
    <property type="project" value="UniProtKB-KW"/>
</dbReference>
<dbReference type="GO" id="GO:0044071">
    <property type="term" value="P:symbiont-mediated perturbation of host cell cycle progression"/>
    <property type="evidence" value="ECO:0000303"/>
    <property type="project" value="UniProtKB"/>
</dbReference>
<dbReference type="GO" id="GO:0052026">
    <property type="term" value="P:symbiont-mediated perturbation of host transcription"/>
    <property type="evidence" value="ECO:0000303"/>
    <property type="project" value="UniProtKB"/>
</dbReference>
<dbReference type="GO" id="GO:0140321">
    <property type="term" value="P:symbiont-mediated suppression of host autophagy"/>
    <property type="evidence" value="ECO:0000314"/>
    <property type="project" value="UniProtKB"/>
</dbReference>
<dbReference type="GO" id="GO:0039554">
    <property type="term" value="P:symbiont-mediated suppression of host cytoplasmic pattern recognition receptor signaling pathway via inhibition of MDA-5 activity"/>
    <property type="evidence" value="ECO:0007669"/>
    <property type="project" value="UniProtKB-KW"/>
</dbReference>
<dbReference type="GO" id="GO:0039540">
    <property type="term" value="P:symbiont-mediated suppression of host cytoplasmic pattern recognition receptor signaling pathway via inhibition of RIG-I activity"/>
    <property type="evidence" value="ECO:0000269"/>
    <property type="project" value="SigSci"/>
</dbReference>
<dbReference type="GO" id="GO:0039723">
    <property type="term" value="P:symbiont-mediated suppression of host cytoplasmic pattern recognition receptor signaling pathway via inhibition of TBK1 activity"/>
    <property type="evidence" value="ECO:0007669"/>
    <property type="project" value="UniProtKB-KW"/>
</dbReference>
<dbReference type="GO" id="GO:0039580">
    <property type="term" value="P:symbiont-mediated suppression of host PKR/eIFalpha signaling"/>
    <property type="evidence" value="ECO:0000314"/>
    <property type="project" value="UniProtKB"/>
</dbReference>
<dbReference type="GO" id="GO:0039722">
    <property type="term" value="P:symbiont-mediated suppression of host toll-like receptor signaling pathway"/>
    <property type="evidence" value="ECO:0007669"/>
    <property type="project" value="UniProtKB-KW"/>
</dbReference>
<dbReference type="GO" id="GO:0039502">
    <property type="term" value="P:symbiont-mediated suppression of host type I interferon-mediated signaling pathway"/>
    <property type="evidence" value="ECO:0007669"/>
    <property type="project" value="UniProtKB-KW"/>
</dbReference>
<organismHost>
    <name type="scientific">Homo sapiens</name>
    <name type="common">Human</name>
    <dbReference type="NCBI Taxonomy" id="9606"/>
</organismHost>
<evidence type="ECO:0000256" key="1">
    <source>
        <dbReference type="SAM" id="MobiDB-lite"/>
    </source>
</evidence>
<evidence type="ECO:0000269" key="2">
    <source>
    </source>
</evidence>
<evidence type="ECO:0000269" key="3">
    <source>
    </source>
</evidence>
<evidence type="ECO:0000269" key="4">
    <source>
    </source>
</evidence>
<evidence type="ECO:0000269" key="5">
    <source>
    </source>
</evidence>
<evidence type="ECO:0000269" key="6">
    <source>
    </source>
</evidence>
<evidence type="ECO:0000269" key="7">
    <source>
    </source>
</evidence>
<evidence type="ECO:0000269" key="8">
    <source>
    </source>
</evidence>
<evidence type="ECO:0000269" key="9">
    <source>
    </source>
</evidence>
<evidence type="ECO:0000305" key="10"/>